<evidence type="ECO:0000255" key="1">
    <source>
        <dbReference type="HAMAP-Rule" id="MF_01382"/>
    </source>
</evidence>
<accession>Q042C9</accession>
<name>SECA_LACGA</name>
<organism>
    <name type="scientific">Lactobacillus gasseri (strain ATCC 33323 / DSM 20243 / BCRC 14619 / CIP 102991 / JCM 1131 / KCTC 3163 / NCIMB 11718 / NCTC 13722 / AM63)</name>
    <dbReference type="NCBI Taxonomy" id="324831"/>
    <lineage>
        <taxon>Bacteria</taxon>
        <taxon>Bacillati</taxon>
        <taxon>Bacillota</taxon>
        <taxon>Bacilli</taxon>
        <taxon>Lactobacillales</taxon>
        <taxon>Lactobacillaceae</taxon>
        <taxon>Lactobacillus</taxon>
    </lineage>
</organism>
<keyword id="KW-0067">ATP-binding</keyword>
<keyword id="KW-1003">Cell membrane</keyword>
<keyword id="KW-0963">Cytoplasm</keyword>
<keyword id="KW-0472">Membrane</keyword>
<keyword id="KW-0547">Nucleotide-binding</keyword>
<keyword id="KW-0653">Protein transport</keyword>
<keyword id="KW-1278">Translocase</keyword>
<keyword id="KW-0811">Translocation</keyword>
<keyword id="KW-0813">Transport</keyword>
<dbReference type="EC" id="7.4.2.8" evidence="1"/>
<dbReference type="EMBL" id="CP000413">
    <property type="protein sequence ID" value="ABJ60693.1"/>
    <property type="molecule type" value="Genomic_DNA"/>
</dbReference>
<dbReference type="RefSeq" id="WP_003646991.1">
    <property type="nucleotide sequence ID" value="NZ_WBMG01000003.1"/>
</dbReference>
<dbReference type="SMR" id="Q042C9"/>
<dbReference type="GeneID" id="29638882"/>
<dbReference type="KEGG" id="lga:LGAS_1331"/>
<dbReference type="HOGENOM" id="CLU_005314_3_2_9"/>
<dbReference type="BioCyc" id="LGAS324831:G1G6Y-1325-MONOMER"/>
<dbReference type="Proteomes" id="UP000000664">
    <property type="component" value="Chromosome"/>
</dbReference>
<dbReference type="GO" id="GO:0031522">
    <property type="term" value="C:cell envelope Sec protein transport complex"/>
    <property type="evidence" value="ECO:0007669"/>
    <property type="project" value="TreeGrafter"/>
</dbReference>
<dbReference type="GO" id="GO:0005829">
    <property type="term" value="C:cytosol"/>
    <property type="evidence" value="ECO:0007669"/>
    <property type="project" value="TreeGrafter"/>
</dbReference>
<dbReference type="GO" id="GO:0005886">
    <property type="term" value="C:plasma membrane"/>
    <property type="evidence" value="ECO:0007669"/>
    <property type="project" value="UniProtKB-SubCell"/>
</dbReference>
<dbReference type="GO" id="GO:0005524">
    <property type="term" value="F:ATP binding"/>
    <property type="evidence" value="ECO:0007669"/>
    <property type="project" value="UniProtKB-UniRule"/>
</dbReference>
<dbReference type="GO" id="GO:0008564">
    <property type="term" value="F:protein-exporting ATPase activity"/>
    <property type="evidence" value="ECO:0007669"/>
    <property type="project" value="UniProtKB-EC"/>
</dbReference>
<dbReference type="GO" id="GO:0065002">
    <property type="term" value="P:intracellular protein transmembrane transport"/>
    <property type="evidence" value="ECO:0007669"/>
    <property type="project" value="UniProtKB-UniRule"/>
</dbReference>
<dbReference type="GO" id="GO:0017038">
    <property type="term" value="P:protein import"/>
    <property type="evidence" value="ECO:0007669"/>
    <property type="project" value="InterPro"/>
</dbReference>
<dbReference type="GO" id="GO:0006605">
    <property type="term" value="P:protein targeting"/>
    <property type="evidence" value="ECO:0007669"/>
    <property type="project" value="UniProtKB-UniRule"/>
</dbReference>
<dbReference type="GO" id="GO:0043952">
    <property type="term" value="P:protein transport by the Sec complex"/>
    <property type="evidence" value="ECO:0007669"/>
    <property type="project" value="TreeGrafter"/>
</dbReference>
<dbReference type="CDD" id="cd17928">
    <property type="entry name" value="DEXDc_SecA"/>
    <property type="match status" value="1"/>
</dbReference>
<dbReference type="CDD" id="cd18803">
    <property type="entry name" value="SF2_C_secA"/>
    <property type="match status" value="1"/>
</dbReference>
<dbReference type="FunFam" id="3.40.50.300:FF:000429">
    <property type="entry name" value="Preprotein translocase subunit SecA"/>
    <property type="match status" value="1"/>
</dbReference>
<dbReference type="FunFam" id="3.90.1440.10:FF:000001">
    <property type="entry name" value="Preprotein translocase subunit SecA"/>
    <property type="match status" value="1"/>
</dbReference>
<dbReference type="Gene3D" id="1.10.3060.10">
    <property type="entry name" value="Helical scaffold and wing domains of SecA"/>
    <property type="match status" value="1"/>
</dbReference>
<dbReference type="Gene3D" id="3.40.50.300">
    <property type="entry name" value="P-loop containing nucleotide triphosphate hydrolases"/>
    <property type="match status" value="3"/>
</dbReference>
<dbReference type="Gene3D" id="3.90.1440.10">
    <property type="entry name" value="SecA, preprotein cross-linking domain"/>
    <property type="match status" value="1"/>
</dbReference>
<dbReference type="HAMAP" id="MF_01382">
    <property type="entry name" value="SecA"/>
    <property type="match status" value="1"/>
</dbReference>
<dbReference type="InterPro" id="IPR014001">
    <property type="entry name" value="Helicase_ATP-bd"/>
</dbReference>
<dbReference type="InterPro" id="IPR001650">
    <property type="entry name" value="Helicase_C-like"/>
</dbReference>
<dbReference type="InterPro" id="IPR027417">
    <property type="entry name" value="P-loop_NTPase"/>
</dbReference>
<dbReference type="InterPro" id="IPR000185">
    <property type="entry name" value="SecA"/>
</dbReference>
<dbReference type="InterPro" id="IPR020937">
    <property type="entry name" value="SecA_CS"/>
</dbReference>
<dbReference type="InterPro" id="IPR011115">
    <property type="entry name" value="SecA_DEAD"/>
</dbReference>
<dbReference type="InterPro" id="IPR014018">
    <property type="entry name" value="SecA_motor_DEAD"/>
</dbReference>
<dbReference type="InterPro" id="IPR011130">
    <property type="entry name" value="SecA_preprotein_X-link_dom"/>
</dbReference>
<dbReference type="InterPro" id="IPR044722">
    <property type="entry name" value="SecA_SF2_C"/>
</dbReference>
<dbReference type="InterPro" id="IPR011116">
    <property type="entry name" value="SecA_Wing/Scaffold"/>
</dbReference>
<dbReference type="InterPro" id="IPR036266">
    <property type="entry name" value="SecA_Wing/Scaffold_sf"/>
</dbReference>
<dbReference type="InterPro" id="IPR036670">
    <property type="entry name" value="SecA_X-link_sf"/>
</dbReference>
<dbReference type="NCBIfam" id="NF006630">
    <property type="entry name" value="PRK09200.1"/>
    <property type="match status" value="1"/>
</dbReference>
<dbReference type="NCBIfam" id="NF009538">
    <property type="entry name" value="PRK12904.1"/>
    <property type="match status" value="1"/>
</dbReference>
<dbReference type="NCBIfam" id="TIGR00963">
    <property type="entry name" value="secA"/>
    <property type="match status" value="1"/>
</dbReference>
<dbReference type="PANTHER" id="PTHR30612:SF0">
    <property type="entry name" value="CHLOROPLAST PROTEIN-TRANSPORTING ATPASE"/>
    <property type="match status" value="1"/>
</dbReference>
<dbReference type="PANTHER" id="PTHR30612">
    <property type="entry name" value="SECA INNER MEMBRANE COMPONENT OF SEC PROTEIN SECRETION SYSTEM"/>
    <property type="match status" value="1"/>
</dbReference>
<dbReference type="Pfam" id="PF21090">
    <property type="entry name" value="P-loop_SecA"/>
    <property type="match status" value="2"/>
</dbReference>
<dbReference type="Pfam" id="PF07517">
    <property type="entry name" value="SecA_DEAD"/>
    <property type="match status" value="1"/>
</dbReference>
<dbReference type="Pfam" id="PF01043">
    <property type="entry name" value="SecA_PP_bind"/>
    <property type="match status" value="1"/>
</dbReference>
<dbReference type="Pfam" id="PF07516">
    <property type="entry name" value="SecA_SW"/>
    <property type="match status" value="1"/>
</dbReference>
<dbReference type="PRINTS" id="PR00906">
    <property type="entry name" value="SECA"/>
</dbReference>
<dbReference type="SMART" id="SM00490">
    <property type="entry name" value="HELICc"/>
    <property type="match status" value="1"/>
</dbReference>
<dbReference type="SMART" id="SM00957">
    <property type="entry name" value="SecA_DEAD"/>
    <property type="match status" value="1"/>
</dbReference>
<dbReference type="SMART" id="SM00958">
    <property type="entry name" value="SecA_PP_bind"/>
    <property type="match status" value="1"/>
</dbReference>
<dbReference type="SUPFAM" id="SSF81886">
    <property type="entry name" value="Helical scaffold and wing domains of SecA"/>
    <property type="match status" value="1"/>
</dbReference>
<dbReference type="SUPFAM" id="SSF52540">
    <property type="entry name" value="P-loop containing nucleoside triphosphate hydrolases"/>
    <property type="match status" value="2"/>
</dbReference>
<dbReference type="SUPFAM" id="SSF81767">
    <property type="entry name" value="Pre-protein crosslinking domain of SecA"/>
    <property type="match status" value="1"/>
</dbReference>
<dbReference type="PROSITE" id="PS01312">
    <property type="entry name" value="SECA"/>
    <property type="match status" value="1"/>
</dbReference>
<dbReference type="PROSITE" id="PS51196">
    <property type="entry name" value="SECA_MOTOR_DEAD"/>
    <property type="match status" value="1"/>
</dbReference>
<sequence length="799" mass="91544">MANILKKIYDNDRRELKKFEKLATKVESLADEYEKLSDEQLQAKTPEFRKRLEKGETLDDLLPEAFATAREGAKRVLGLYPFRVQIIGGIALHYGNIAEMMTGEGKTLTATLPVYLNALTGKGVHVVTVNEYLSSRDESEMGQLYKWLGLTVGLNLNSMSADEKRDAYNCDVTYSTNSELGFDYLRDNMVVYKDQMVQRPLNYAIIDEVDSILIDEARTPLIISGQAEQANSEYIRADRFVKTLTEDKSDDDADDDEDHGDYKIDWPTKTINLTNQGIKKACEHFGLKNLYDIDNQVLVHHIDQALRANYIMLKDIDYVVQNGEVMIVDSFTGRVMEGRRYSDGLHQAIEAKEGVKIQEESKTQATITYQNFFRMYKKLAGMTGTAKTEEEEFREIYNMEVITIPTNRPIARKDLPDILYPTLDSKFEAVVKEIKERHAKGQPVLVGTVAIESSERLSKMLDQAGIPHAVLNAKNHAKEAEIIMNAGQRGAVTIATNMAGRGTDIKLGPGVKELGGLAVIGTERHESRRIDNQLRGRSGRQGDPGVTRFYLSLEDDLMKRFGGDRVKLFLDRISDNDDDKVIESRMITKQVESAQKRVEGNNYDTRKQTLQYDDVMRTQREIIYGERMQVISEEKTLKPVLMPMIKRTIDHQVDMYTQGDKKDWRNDQLRDFISSAITDEETTKKLNIKHLGAEELKKRLYKIAEDNYAEKEKQLADPEQMLEFEKVVILRVVDERWTDHIDAMDQLRQSISLRGYGQLNPLVEYQEAGYRMFEEMISDIEFDATRLFMKAQIRQNISR</sequence>
<proteinExistence type="inferred from homology"/>
<gene>
    <name evidence="1" type="primary">secA</name>
    <name type="ordered locus">LGAS_1331</name>
</gene>
<protein>
    <recommendedName>
        <fullName evidence="1">Protein translocase subunit SecA</fullName>
        <ecNumber evidence="1">7.4.2.8</ecNumber>
    </recommendedName>
</protein>
<comment type="function">
    <text evidence="1">Part of the Sec protein translocase complex. Interacts with the SecYEG preprotein conducting channel. Has a central role in coupling the hydrolysis of ATP to the transfer of proteins into and across the cell membrane, serving as an ATP-driven molecular motor driving the stepwise translocation of polypeptide chains across the membrane.</text>
</comment>
<comment type="catalytic activity">
    <reaction evidence="1">
        <text>ATP + H2O + cellular proteinSide 1 = ADP + phosphate + cellular proteinSide 2.</text>
        <dbReference type="EC" id="7.4.2.8"/>
    </reaction>
</comment>
<comment type="subunit">
    <text evidence="1">Monomer and homodimer. Part of the essential Sec protein translocation apparatus which comprises SecA, SecYEG and auxiliary proteins SecDF. Other proteins may also be involved.</text>
</comment>
<comment type="subcellular location">
    <subcellularLocation>
        <location evidence="1">Cell membrane</location>
        <topology evidence="1">Peripheral membrane protein</topology>
        <orientation evidence="1">Cytoplasmic side</orientation>
    </subcellularLocation>
    <subcellularLocation>
        <location evidence="1">Cytoplasm</location>
    </subcellularLocation>
    <text evidence="1">Distribution is 50-50.</text>
</comment>
<comment type="similarity">
    <text evidence="1">Belongs to the SecA family.</text>
</comment>
<feature type="chain" id="PRO_1000073479" description="Protein translocase subunit SecA">
    <location>
        <begin position="1"/>
        <end position="799"/>
    </location>
</feature>
<feature type="binding site" evidence="1">
    <location>
        <position position="85"/>
    </location>
    <ligand>
        <name>ATP</name>
        <dbReference type="ChEBI" id="CHEBI:30616"/>
    </ligand>
</feature>
<feature type="binding site" evidence="1">
    <location>
        <begin position="103"/>
        <end position="107"/>
    </location>
    <ligand>
        <name>ATP</name>
        <dbReference type="ChEBI" id="CHEBI:30616"/>
    </ligand>
</feature>
<feature type="binding site" evidence="1">
    <location>
        <position position="504"/>
    </location>
    <ligand>
        <name>ATP</name>
        <dbReference type="ChEBI" id="CHEBI:30616"/>
    </ligand>
</feature>
<reference key="1">
    <citation type="journal article" date="2006" name="Proc. Natl. Acad. Sci. U.S.A.">
        <title>Comparative genomics of the lactic acid bacteria.</title>
        <authorList>
            <person name="Makarova K.S."/>
            <person name="Slesarev A."/>
            <person name="Wolf Y.I."/>
            <person name="Sorokin A."/>
            <person name="Mirkin B."/>
            <person name="Koonin E.V."/>
            <person name="Pavlov A."/>
            <person name="Pavlova N."/>
            <person name="Karamychev V."/>
            <person name="Polouchine N."/>
            <person name="Shakhova V."/>
            <person name="Grigoriev I."/>
            <person name="Lou Y."/>
            <person name="Rohksar D."/>
            <person name="Lucas S."/>
            <person name="Huang K."/>
            <person name="Goodstein D.M."/>
            <person name="Hawkins T."/>
            <person name="Plengvidhya V."/>
            <person name="Welker D."/>
            <person name="Hughes J."/>
            <person name="Goh Y."/>
            <person name="Benson A."/>
            <person name="Baldwin K."/>
            <person name="Lee J.-H."/>
            <person name="Diaz-Muniz I."/>
            <person name="Dosti B."/>
            <person name="Smeianov V."/>
            <person name="Wechter W."/>
            <person name="Barabote R."/>
            <person name="Lorca G."/>
            <person name="Altermann E."/>
            <person name="Barrangou R."/>
            <person name="Ganesan B."/>
            <person name="Xie Y."/>
            <person name="Rawsthorne H."/>
            <person name="Tamir D."/>
            <person name="Parker C."/>
            <person name="Breidt F."/>
            <person name="Broadbent J.R."/>
            <person name="Hutkins R."/>
            <person name="O'Sullivan D."/>
            <person name="Steele J."/>
            <person name="Unlu G."/>
            <person name="Saier M.H. Jr."/>
            <person name="Klaenhammer T."/>
            <person name="Richardson P."/>
            <person name="Kozyavkin S."/>
            <person name="Weimer B.C."/>
            <person name="Mills D.A."/>
        </authorList>
    </citation>
    <scope>NUCLEOTIDE SEQUENCE [LARGE SCALE GENOMIC DNA]</scope>
    <source>
        <strain>ATCC 33323 / DSM 20243 / BCRC 14619 / CIP 102991 / JCM 1131 / KCTC 3163 / NCIMB 11718 / NCTC 13722 / AM63</strain>
    </source>
</reference>